<feature type="chain" id="PRO_0000185602" description="Probable D-serine dehydratase">
    <location>
        <begin position="1"/>
        <end position="443"/>
    </location>
</feature>
<feature type="modified residue" description="N6-(pyridoxal phosphate)lysine" evidence="1">
    <location>
        <position position="116"/>
    </location>
</feature>
<dbReference type="EC" id="4.3.1.18" evidence="1"/>
<dbReference type="EMBL" id="AE016877">
    <property type="protein sequence ID" value="AAP08701.1"/>
    <property type="molecule type" value="Genomic_DNA"/>
</dbReference>
<dbReference type="RefSeq" id="NP_831500.1">
    <property type="nucleotide sequence ID" value="NC_004722.1"/>
</dbReference>
<dbReference type="RefSeq" id="WP_000658539.1">
    <property type="nucleotide sequence ID" value="NZ_CP034551.1"/>
</dbReference>
<dbReference type="SMR" id="Q81F73"/>
<dbReference type="STRING" id="226900.BC_1725"/>
<dbReference type="KEGG" id="bce:BC1725"/>
<dbReference type="PATRIC" id="fig|226900.8.peg.1713"/>
<dbReference type="HOGENOM" id="CLU_035707_0_0_9"/>
<dbReference type="OrthoDB" id="9780546at2"/>
<dbReference type="Proteomes" id="UP000001417">
    <property type="component" value="Chromosome"/>
</dbReference>
<dbReference type="GO" id="GO:0008721">
    <property type="term" value="F:D-serine ammonia-lyase activity"/>
    <property type="evidence" value="ECO:0000318"/>
    <property type="project" value="GO_Central"/>
</dbReference>
<dbReference type="GO" id="GO:0016836">
    <property type="term" value="F:hydro-lyase activity"/>
    <property type="evidence" value="ECO:0007669"/>
    <property type="project" value="UniProtKB-UniRule"/>
</dbReference>
<dbReference type="GO" id="GO:0030170">
    <property type="term" value="F:pyridoxal phosphate binding"/>
    <property type="evidence" value="ECO:0007669"/>
    <property type="project" value="InterPro"/>
</dbReference>
<dbReference type="GO" id="GO:0036088">
    <property type="term" value="P:D-serine catabolic process"/>
    <property type="evidence" value="ECO:0000318"/>
    <property type="project" value="GO_Central"/>
</dbReference>
<dbReference type="CDD" id="cd06447">
    <property type="entry name" value="D-Ser-dehyd"/>
    <property type="match status" value="1"/>
</dbReference>
<dbReference type="FunFam" id="3.40.50.1100:FF:000018">
    <property type="entry name" value="D-serine dehydratase"/>
    <property type="match status" value="1"/>
</dbReference>
<dbReference type="Gene3D" id="3.40.50.1100">
    <property type="match status" value="2"/>
</dbReference>
<dbReference type="HAMAP" id="MF_01030">
    <property type="entry name" value="D_Ser_dehydrat"/>
    <property type="match status" value="1"/>
</dbReference>
<dbReference type="InterPro" id="IPR011780">
    <property type="entry name" value="D_Ser_am_lyase"/>
</dbReference>
<dbReference type="InterPro" id="IPR050147">
    <property type="entry name" value="Ser/Thr_Dehydratase"/>
</dbReference>
<dbReference type="InterPro" id="IPR000634">
    <property type="entry name" value="Ser/Thr_deHydtase_PyrdxlP-BS"/>
</dbReference>
<dbReference type="InterPro" id="IPR001926">
    <property type="entry name" value="TrpB-like_PALP"/>
</dbReference>
<dbReference type="InterPro" id="IPR036052">
    <property type="entry name" value="TrpB-like_PALP_sf"/>
</dbReference>
<dbReference type="NCBIfam" id="TIGR02035">
    <property type="entry name" value="D_Ser_am_lyase"/>
    <property type="match status" value="1"/>
</dbReference>
<dbReference type="NCBIfam" id="NF002823">
    <property type="entry name" value="PRK02991.1"/>
    <property type="match status" value="1"/>
</dbReference>
<dbReference type="PANTHER" id="PTHR48078:SF9">
    <property type="entry name" value="D-SERINE DEHYDRATASE"/>
    <property type="match status" value="1"/>
</dbReference>
<dbReference type="PANTHER" id="PTHR48078">
    <property type="entry name" value="THREONINE DEHYDRATASE, MITOCHONDRIAL-RELATED"/>
    <property type="match status" value="1"/>
</dbReference>
<dbReference type="Pfam" id="PF00291">
    <property type="entry name" value="PALP"/>
    <property type="match status" value="1"/>
</dbReference>
<dbReference type="SUPFAM" id="SSF53686">
    <property type="entry name" value="Tryptophan synthase beta subunit-like PLP-dependent enzymes"/>
    <property type="match status" value="1"/>
</dbReference>
<dbReference type="PROSITE" id="PS00165">
    <property type="entry name" value="DEHYDRATASE_SER_THR"/>
    <property type="match status" value="1"/>
</dbReference>
<accession>Q81F73</accession>
<gene>
    <name evidence="1" type="primary">dsdA</name>
    <name type="ordered locus">BC_1725</name>
</gene>
<name>SDHD_BACCR</name>
<keyword id="KW-0456">Lyase</keyword>
<keyword id="KW-0663">Pyridoxal phosphate</keyword>
<keyword id="KW-1185">Reference proteome</keyword>
<reference key="1">
    <citation type="journal article" date="2003" name="Nature">
        <title>Genome sequence of Bacillus cereus and comparative analysis with Bacillus anthracis.</title>
        <authorList>
            <person name="Ivanova N."/>
            <person name="Sorokin A."/>
            <person name="Anderson I."/>
            <person name="Galleron N."/>
            <person name="Candelon B."/>
            <person name="Kapatral V."/>
            <person name="Bhattacharyya A."/>
            <person name="Reznik G."/>
            <person name="Mikhailova N."/>
            <person name="Lapidus A."/>
            <person name="Chu L."/>
            <person name="Mazur M."/>
            <person name="Goltsman E."/>
            <person name="Larsen N."/>
            <person name="D'Souza M."/>
            <person name="Walunas T."/>
            <person name="Grechkin Y."/>
            <person name="Pusch G."/>
            <person name="Haselkorn R."/>
            <person name="Fonstein M."/>
            <person name="Ehrlich S.D."/>
            <person name="Overbeek R."/>
            <person name="Kyrpides N.C."/>
        </authorList>
    </citation>
    <scope>NUCLEOTIDE SEQUENCE [LARGE SCALE GENOMIC DNA]</scope>
    <source>
        <strain>ATCC 14579 / DSM 31 / CCUG 7414 / JCM 2152 / NBRC 15305 / NCIMB 9373 / NCTC 2599 / NRRL B-3711</strain>
    </source>
</reference>
<sequence length="443" mass="49063">MKEIGALQAEYPLVNKLIATEEVFWINPNIEKYETAIKDSPLNEENVKDAEERLKRFAPYIAKVFPETKGANGIIESPLVKIPSMKEALERKYEQPILGELLLKCDSHLPISGSIKARGGIYEVLKHAEQLALQHGMVTEEDNYSVLDSDTCREFFSKYSIAVGSTGNLGLSIGIMSANLGFNVTVHMSADAKEWKKDLLRSKGVNVIEYEDDYSKAVEEGRRQADADPSCYFVDDENSHDLFLGYAVAASRLQKQLEELEVVVDENHPLFVYLPCGVGGGPGGVAFGLKLLYKDNVHCYFAEPTHSPCMLLGLMTGLHDKISVQDIGIDNVTDADGLAVGRPSGFVGKTMEPFLSGNYTVSDEELYRLLKELADTENIYLEPSALAGMIGPVKVCKEDEYLQKLQLTEKVKKGTHIVWGTGGSMVPNDTMDEYYRKGLELTI</sequence>
<protein>
    <recommendedName>
        <fullName evidence="1">Probable D-serine dehydratase</fullName>
        <ecNumber evidence="1">4.3.1.18</ecNumber>
    </recommendedName>
    <alternativeName>
        <fullName evidence="1">D-serine deaminase</fullName>
        <shortName evidence="1">DSD</shortName>
    </alternativeName>
</protein>
<evidence type="ECO:0000255" key="1">
    <source>
        <dbReference type="HAMAP-Rule" id="MF_01030"/>
    </source>
</evidence>
<proteinExistence type="inferred from homology"/>
<comment type="catalytic activity">
    <reaction evidence="1">
        <text>D-serine = pyruvate + NH4(+)</text>
        <dbReference type="Rhea" id="RHEA:13977"/>
        <dbReference type="ChEBI" id="CHEBI:15361"/>
        <dbReference type="ChEBI" id="CHEBI:28938"/>
        <dbReference type="ChEBI" id="CHEBI:35247"/>
        <dbReference type="EC" id="4.3.1.18"/>
    </reaction>
</comment>
<comment type="cofactor">
    <cofactor evidence="1">
        <name>pyridoxal 5'-phosphate</name>
        <dbReference type="ChEBI" id="CHEBI:597326"/>
    </cofactor>
</comment>
<comment type="similarity">
    <text evidence="1">Belongs to the serine/threonine dehydratase family. DsdA subfamily.</text>
</comment>
<organism>
    <name type="scientific">Bacillus cereus (strain ATCC 14579 / DSM 31 / CCUG 7414 / JCM 2152 / NBRC 15305 / NCIMB 9373 / NCTC 2599 / NRRL B-3711)</name>
    <dbReference type="NCBI Taxonomy" id="226900"/>
    <lineage>
        <taxon>Bacteria</taxon>
        <taxon>Bacillati</taxon>
        <taxon>Bacillota</taxon>
        <taxon>Bacilli</taxon>
        <taxon>Bacillales</taxon>
        <taxon>Bacillaceae</taxon>
        <taxon>Bacillus</taxon>
        <taxon>Bacillus cereus group</taxon>
    </lineage>
</organism>